<evidence type="ECO:0000250" key="1">
    <source>
        <dbReference type="UniProtKB" id="Q8Z7H3"/>
    </source>
</evidence>
<evidence type="ECO:0000255" key="2"/>
<evidence type="ECO:0000255" key="3">
    <source>
        <dbReference type="PROSITE-ProRule" id="PRU00102"/>
    </source>
</evidence>
<evidence type="ECO:0000255" key="4">
    <source>
        <dbReference type="PROSITE-ProRule" id="PRU00107"/>
    </source>
</evidence>
<evidence type="ECO:0000269" key="5">
    <source>
    </source>
</evidence>
<evidence type="ECO:0000269" key="6">
    <source>
    </source>
</evidence>
<evidence type="ECO:0000269" key="7">
    <source>
    </source>
</evidence>
<evidence type="ECO:0000303" key="8">
    <source>
    </source>
</evidence>
<evidence type="ECO:0000305" key="9">
    <source>
    </source>
</evidence>
<sequence>MIRSLRIRLMLGAAALAVLFMLALLPALQRAFGIALENTIEQRLAADVATLVSAARVEKGRLVMPEHLPVEEFNLPEAKVLGYIYDQNGDLLWRSTSAADESINYTPRYDGRGNEFHTTRDAKGEEFFVFDVEIDLLRGKQAAYSIVTMQSVSEFESLLKGFREQLYLWLGGALLVLLGLLWLGLTWGFRAMRGLSSELDQIESGERESLSEEHPRELLRLTHSLNRLLRSEHKQRERYRHSLGDLAHSLKTPLAVLQGVGDQLAEEPGNREQVRVLQGQIERMSQQIGYQLQRASLRKSGLVRHREQLAPLVETLCDALDKVYRDKRVSLQRDFSPSFSVPVERGALLELLGNLLENAYRLCLGRVRVGARLGPGYSELWVEDDGPGVPAEQRARIIRRGERADTQHPGQGIGLAVALDIIESYDGELSLDDSELGGACFRIRFATV</sequence>
<feature type="signal peptide" evidence="2">
    <location>
        <begin position="1"/>
        <end position="33"/>
    </location>
</feature>
<feature type="chain" id="PRO_0000449421" description="Two-component sensor PhoQ" evidence="2">
    <location>
        <begin position="34"/>
        <end position="448"/>
    </location>
</feature>
<feature type="transmembrane region" description="Helical" evidence="2">
    <location>
        <begin position="169"/>
        <end position="189"/>
    </location>
</feature>
<feature type="domain" description="HAMP" evidence="3">
    <location>
        <begin position="186"/>
        <end position="237"/>
    </location>
</feature>
<feature type="domain" description="Histidine kinase" evidence="4">
    <location>
        <begin position="245"/>
        <end position="448"/>
    </location>
</feature>
<feature type="modified residue" description="Phosphohistidine; by autocatalysis" evidence="4">
    <location>
        <position position="248"/>
    </location>
</feature>
<reference key="1">
    <citation type="journal article" date="2000" name="Nature">
        <title>Complete genome sequence of Pseudomonas aeruginosa PAO1, an opportunistic pathogen.</title>
        <authorList>
            <person name="Stover C.K."/>
            <person name="Pham X.-Q.T."/>
            <person name="Erwin A.L."/>
            <person name="Mizoguchi S.D."/>
            <person name="Warrener P."/>
            <person name="Hickey M.J."/>
            <person name="Brinkman F.S.L."/>
            <person name="Hufnagle W.O."/>
            <person name="Kowalik D.J."/>
            <person name="Lagrou M."/>
            <person name="Garber R.L."/>
            <person name="Goltry L."/>
            <person name="Tolentino E."/>
            <person name="Westbrock-Wadman S."/>
            <person name="Yuan Y."/>
            <person name="Brody L.L."/>
            <person name="Coulter S.N."/>
            <person name="Folger K.R."/>
            <person name="Kas A."/>
            <person name="Larbig K."/>
            <person name="Lim R.M."/>
            <person name="Smith K.A."/>
            <person name="Spencer D.H."/>
            <person name="Wong G.K.-S."/>
            <person name="Wu Z."/>
            <person name="Paulsen I.T."/>
            <person name="Reizer J."/>
            <person name="Saier M.H. Jr."/>
            <person name="Hancock R.E.W."/>
            <person name="Lory S."/>
            <person name="Olson M.V."/>
        </authorList>
    </citation>
    <scope>NUCLEOTIDE SEQUENCE [LARGE SCALE GENOMIC DNA]</scope>
    <source>
        <strain>ATCC 15692 / DSM 22644 / CIP 104116 / JCM 14847 / LMG 12228 / 1C / PRS 101 / PAO1</strain>
    </source>
</reference>
<reference key="2">
    <citation type="journal article" date="1999" name="Mol. Microbiol.">
        <title>PhoP-PhoQ homologues in Pseudomonas aeruginosa regulate expression of the outer-membrane protein OprH and polymyxin B resistance.</title>
        <authorList>
            <person name="Macfarlane E.L."/>
            <person name="Kwasnicka A."/>
            <person name="Ochs M.M."/>
            <person name="Hancock R.E."/>
        </authorList>
    </citation>
    <scope>FUNCTION</scope>
    <scope>DISRUPTION PHENOTYPE</scope>
</reference>
<reference key="3">
    <citation type="journal article" date="2000" name="Microbiology">
        <title>Role of Pseudomonas aeruginosa PhoP-phoQ in resistance to antimicrobial cationic peptides and aminoglycosides.</title>
        <authorList>
            <person name="Macfarlane E.L.A."/>
            <person name="Kwasnicka A."/>
            <person name="Hancock R.E.W."/>
        </authorList>
    </citation>
    <scope>FUNCTION</scope>
    <scope>DISRUPTION PHENOTYPE</scope>
</reference>
<reference key="4">
    <citation type="journal article" date="2006" name="J. Bacteriol.">
        <title>Contribution of the PhoP-PhoQ and PmrA-PmrB two-component regulatory systems to Mg2+-induced gene regulation in Pseudomonas aeruginosa.</title>
        <authorList>
            <person name="McPhee J.B."/>
            <person name="Bains M."/>
            <person name="Winsor G."/>
            <person name="Lewenza S."/>
            <person name="Kwasnicka A."/>
            <person name="Brazas M.D."/>
            <person name="Brinkman F.S."/>
            <person name="Hancock R.E."/>
        </authorList>
    </citation>
    <scope>FUNCTION</scope>
</reference>
<protein>
    <recommendedName>
        <fullName evidence="8">Two-component sensor PhoQ</fullName>
        <ecNumber evidence="1">2.7.13.3</ecNumber>
    </recommendedName>
</protein>
<proteinExistence type="inferred from homology"/>
<organism>
    <name type="scientific">Pseudomonas aeruginosa (strain ATCC 15692 / DSM 22644 / CIP 104116 / JCM 14847 / LMG 12228 / 1C / PRS 101 / PAO1)</name>
    <dbReference type="NCBI Taxonomy" id="208964"/>
    <lineage>
        <taxon>Bacteria</taxon>
        <taxon>Pseudomonadati</taxon>
        <taxon>Pseudomonadota</taxon>
        <taxon>Gammaproteobacteria</taxon>
        <taxon>Pseudomonadales</taxon>
        <taxon>Pseudomonadaceae</taxon>
        <taxon>Pseudomonas</taxon>
    </lineage>
</organism>
<accession>Q9I4F8</accession>
<comment type="function">
    <text evidence="5 6 7 9">Member of the two-component regulatory system PhoP/PhoQ that plays a role in the regulation of resistance towards polymyxin B and cationic antimicrobial peptides in response to limiting concentrations of Mg(2+) (PubMed:10564474, PubMed:11021929, PubMed:16707691). May function as a membrane-associated protein kinase that phosphorylates PhoP in response to environmental signals leading to activation of specific gene promoters (Probable).</text>
</comment>
<comment type="catalytic activity">
    <reaction evidence="1">
        <text>ATP + protein L-histidine = ADP + protein N-phospho-L-histidine.</text>
        <dbReference type="EC" id="2.7.13.3"/>
    </reaction>
</comment>
<comment type="subcellular location">
    <subcellularLocation>
        <location evidence="2">Membrane</location>
        <topology evidence="2">Single-pass membrane protein</topology>
    </subcellularLocation>
</comment>
<comment type="disruption phenotype">
    <text evidence="5 6">Deletion mutant displays significantly lower virulence than the wild-type strain (PubMed:10564474). Also exhibits a constitutive polymyxin B resistance (PubMed:11021929).</text>
</comment>
<keyword id="KW-0067">ATP-binding</keyword>
<keyword id="KW-0418">Kinase</keyword>
<keyword id="KW-0472">Membrane</keyword>
<keyword id="KW-0547">Nucleotide-binding</keyword>
<keyword id="KW-0597">Phosphoprotein</keyword>
<keyword id="KW-1185">Reference proteome</keyword>
<keyword id="KW-0732">Signal</keyword>
<keyword id="KW-0808">Transferase</keyword>
<keyword id="KW-0812">Transmembrane</keyword>
<keyword id="KW-1133">Transmembrane helix</keyword>
<keyword id="KW-0902">Two-component regulatory system</keyword>
<gene>
    <name type="primary">phoQ</name>
    <name type="ordered locus">PA1180</name>
</gene>
<dbReference type="EC" id="2.7.13.3" evidence="1"/>
<dbReference type="EMBL" id="AE004091">
    <property type="protein sequence ID" value="AAG04569.1"/>
    <property type="molecule type" value="Genomic_DNA"/>
</dbReference>
<dbReference type="PIR" id="A83498">
    <property type="entry name" value="A83498"/>
</dbReference>
<dbReference type="RefSeq" id="NP_249871.1">
    <property type="nucleotide sequence ID" value="NC_002516.2"/>
</dbReference>
<dbReference type="RefSeq" id="WP_003082438.1">
    <property type="nucleotide sequence ID" value="NZ_QZGE01000006.1"/>
</dbReference>
<dbReference type="SMR" id="Q9I4F8"/>
<dbReference type="FunCoup" id="Q9I4F8">
    <property type="interactions" value="146"/>
</dbReference>
<dbReference type="STRING" id="208964.PA1180"/>
<dbReference type="PaxDb" id="208964-PA1180"/>
<dbReference type="DNASU" id="879187"/>
<dbReference type="GeneID" id="879187"/>
<dbReference type="KEGG" id="pae:PA1180"/>
<dbReference type="PATRIC" id="fig|208964.12.peg.1225"/>
<dbReference type="PseudoCAP" id="PA1180"/>
<dbReference type="HOGENOM" id="CLU_000445_42_2_6"/>
<dbReference type="InParanoid" id="Q9I4F8"/>
<dbReference type="OrthoDB" id="9809567at2"/>
<dbReference type="PhylomeDB" id="Q9I4F8"/>
<dbReference type="BioCyc" id="PAER208964:G1FZ6-1205-MONOMER"/>
<dbReference type="Proteomes" id="UP000002438">
    <property type="component" value="Chromosome"/>
</dbReference>
<dbReference type="GO" id="GO:0005886">
    <property type="term" value="C:plasma membrane"/>
    <property type="evidence" value="ECO:0000318"/>
    <property type="project" value="GO_Central"/>
</dbReference>
<dbReference type="GO" id="GO:0005524">
    <property type="term" value="F:ATP binding"/>
    <property type="evidence" value="ECO:0007669"/>
    <property type="project" value="UniProtKB-KW"/>
</dbReference>
<dbReference type="GO" id="GO:0000155">
    <property type="term" value="F:phosphorelay sensor kinase activity"/>
    <property type="evidence" value="ECO:0007669"/>
    <property type="project" value="InterPro"/>
</dbReference>
<dbReference type="GO" id="GO:0000160">
    <property type="term" value="P:phosphorelay signal transduction system"/>
    <property type="evidence" value="ECO:0000318"/>
    <property type="project" value="GO_Central"/>
</dbReference>
<dbReference type="CDD" id="cd16954">
    <property type="entry name" value="HATPase_PhoQ-like"/>
    <property type="match status" value="1"/>
</dbReference>
<dbReference type="CDD" id="cd00082">
    <property type="entry name" value="HisKA"/>
    <property type="match status" value="1"/>
</dbReference>
<dbReference type="FunFam" id="1.10.287.130:FF:000013">
    <property type="entry name" value="Sensor histidine kinase PhoQ"/>
    <property type="match status" value="1"/>
</dbReference>
<dbReference type="FunFam" id="3.30.565.10:FF:000083">
    <property type="entry name" value="Two-component sensor histidine kinase"/>
    <property type="match status" value="1"/>
</dbReference>
<dbReference type="Gene3D" id="1.10.287.130">
    <property type="match status" value="1"/>
</dbReference>
<dbReference type="Gene3D" id="3.30.565.10">
    <property type="entry name" value="Histidine kinase-like ATPase, C-terminal domain"/>
    <property type="match status" value="1"/>
</dbReference>
<dbReference type="InterPro" id="IPR003660">
    <property type="entry name" value="HAMP_dom"/>
</dbReference>
<dbReference type="InterPro" id="IPR036890">
    <property type="entry name" value="HATPase_C_sf"/>
</dbReference>
<dbReference type="InterPro" id="IPR005467">
    <property type="entry name" value="His_kinase_dom"/>
</dbReference>
<dbReference type="InterPro" id="IPR003661">
    <property type="entry name" value="HisK_dim/P_dom"/>
</dbReference>
<dbReference type="InterPro" id="IPR036097">
    <property type="entry name" value="HisK_dim/P_sf"/>
</dbReference>
<dbReference type="InterPro" id="IPR004358">
    <property type="entry name" value="Sig_transdc_His_kin-like_C"/>
</dbReference>
<dbReference type="InterPro" id="IPR050428">
    <property type="entry name" value="TCS_sensor_his_kinase"/>
</dbReference>
<dbReference type="PANTHER" id="PTHR45436">
    <property type="entry name" value="SENSOR HISTIDINE KINASE YKOH"/>
    <property type="match status" value="1"/>
</dbReference>
<dbReference type="PANTHER" id="PTHR45436:SF4">
    <property type="entry name" value="SENSOR PROTEIN PHOQ"/>
    <property type="match status" value="1"/>
</dbReference>
<dbReference type="Pfam" id="PF02518">
    <property type="entry name" value="HATPase_c"/>
    <property type="match status" value="1"/>
</dbReference>
<dbReference type="Pfam" id="PF00512">
    <property type="entry name" value="HisKA"/>
    <property type="match status" value="1"/>
</dbReference>
<dbReference type="PRINTS" id="PR00344">
    <property type="entry name" value="BCTRLSENSOR"/>
</dbReference>
<dbReference type="SMART" id="SM00387">
    <property type="entry name" value="HATPase_c"/>
    <property type="match status" value="1"/>
</dbReference>
<dbReference type="SMART" id="SM00388">
    <property type="entry name" value="HisKA"/>
    <property type="match status" value="1"/>
</dbReference>
<dbReference type="SUPFAM" id="SSF55874">
    <property type="entry name" value="ATPase domain of HSP90 chaperone/DNA topoisomerase II/histidine kinase"/>
    <property type="match status" value="1"/>
</dbReference>
<dbReference type="SUPFAM" id="SSF47384">
    <property type="entry name" value="Homodimeric domain of signal transducing histidine kinase"/>
    <property type="match status" value="1"/>
</dbReference>
<dbReference type="PROSITE" id="PS50885">
    <property type="entry name" value="HAMP"/>
    <property type="match status" value="1"/>
</dbReference>
<dbReference type="PROSITE" id="PS50109">
    <property type="entry name" value="HIS_KIN"/>
    <property type="match status" value="1"/>
</dbReference>
<name>PHOQ_PSEAE</name>